<organismHost>
    <name type="scientific">Aves</name>
    <dbReference type="NCBI Taxonomy" id="8782"/>
</organismHost>
<organismHost>
    <name type="scientific">Cetacea</name>
    <name type="common">whales</name>
    <dbReference type="NCBI Taxonomy" id="9721"/>
</organismHost>
<organismHost>
    <name type="scientific">Homo sapiens</name>
    <name type="common">Human</name>
    <dbReference type="NCBI Taxonomy" id="9606"/>
</organismHost>
<organismHost>
    <name type="scientific">Phocidae</name>
    <name type="common">true seals</name>
    <dbReference type="NCBI Taxonomy" id="9709"/>
</organismHost>
<organismHost>
    <name type="scientific">Sus scrofa</name>
    <name type="common">Pig</name>
    <dbReference type="NCBI Taxonomy" id="9823"/>
</organismHost>
<accession>P03494</accession>
<evidence type="ECO:0000255" key="1">
    <source>
        <dbReference type="HAMAP-Rule" id="MF_04066"/>
    </source>
</evidence>
<evidence type="ECO:0000256" key="2">
    <source>
        <dbReference type="SAM" id="MobiDB-lite"/>
    </source>
</evidence>
<protein>
    <recommendedName>
        <fullName evidence="1">Non-structural protein 1</fullName>
        <shortName evidence="1">NS1</shortName>
    </recommendedName>
    <alternativeName>
        <fullName evidence="1">NS1A</fullName>
    </alternativeName>
</protein>
<proteinExistence type="inferred from homology"/>
<organism>
    <name type="scientific">Influenza A virus (strain A/Alaska/6/1977 H3N2)</name>
    <dbReference type="NCBI Taxonomy" id="385576"/>
    <lineage>
        <taxon>Viruses</taxon>
        <taxon>Riboviria</taxon>
        <taxon>Orthornavirae</taxon>
        <taxon>Negarnaviricota</taxon>
        <taxon>Polyploviricotina</taxon>
        <taxon>Insthoviricetes</taxon>
        <taxon>Articulavirales</taxon>
        <taxon>Orthomyxoviridae</taxon>
        <taxon>Alphainfluenzavirus</taxon>
        <taxon>Alphainfluenzavirus influenzae</taxon>
        <taxon>Influenza A virus</taxon>
    </lineage>
</organism>
<keyword id="KW-0025">Alternative splicing</keyword>
<keyword id="KW-1262">Eukaryotic host gene expression shutoff by virus</keyword>
<keyword id="KW-1035">Host cytoplasm</keyword>
<keyword id="KW-1190">Host gene expression shutoff by virus</keyword>
<keyword id="KW-1192">Host mRNA suppression by virus</keyword>
<keyword id="KW-1048">Host nucleus</keyword>
<keyword id="KW-0945">Host-virus interaction</keyword>
<keyword id="KW-1090">Inhibition of host innate immune response by virus</keyword>
<keyword id="KW-1114">Inhibition of host interferon signaling pathway by virus</keyword>
<keyword id="KW-1102">Inhibition of host PKR by virus</keyword>
<keyword id="KW-1103">Inhibition of host pre-mRNA processing by virus</keyword>
<keyword id="KW-1088">Inhibition of host RIG-I by virus</keyword>
<keyword id="KW-1113">Inhibition of host RLR pathway by virus</keyword>
<keyword id="KW-0922">Interferon antiviral system evasion</keyword>
<keyword id="KW-0694">RNA-binding</keyword>
<keyword id="KW-0832">Ubl conjugation</keyword>
<keyword id="KW-0899">Viral immunoevasion</keyword>
<reference key="1">
    <citation type="journal article" date="1984" name="J. Virol.">
        <title>Analysis of an influenza A virus mutant with a deletion in the NS segment.</title>
        <authorList>
            <person name="Buonagurio D.A."/>
            <person name="Krystal M."/>
            <person name="Palese P."/>
            <person name="Deborde D.C."/>
            <person name="Maassab H.F."/>
        </authorList>
    </citation>
    <scope>NUCLEOTIDE SEQUENCE [GENOMIC RNA]</scope>
</reference>
<reference key="2">
    <citation type="journal article" date="2003" name="Virology">
        <title>Intracellular warfare between human influenza viruses and human cells: the roles of the viral NS1 protein.</title>
        <authorList>
            <person name="Krug R.M."/>
            <person name="Yuan W."/>
            <person name="Noah D.L."/>
            <person name="Latham A.G."/>
        </authorList>
    </citation>
    <scope>REVIEW</scope>
</reference>
<dbReference type="EMBL" id="K01332">
    <property type="protein sequence ID" value="AAA43515.1"/>
    <property type="molecule type" value="Genomic_RNA"/>
</dbReference>
<dbReference type="PIR" id="A04087">
    <property type="entry name" value="MNIV1K"/>
</dbReference>
<dbReference type="BMRB" id="P03494"/>
<dbReference type="SMR" id="P03494"/>
<dbReference type="GO" id="GO:0030430">
    <property type="term" value="C:host cell cytoplasm"/>
    <property type="evidence" value="ECO:0007669"/>
    <property type="project" value="UniProtKB-SubCell"/>
</dbReference>
<dbReference type="GO" id="GO:0042025">
    <property type="term" value="C:host cell nucleus"/>
    <property type="evidence" value="ECO:0007669"/>
    <property type="project" value="UniProtKB-SubCell"/>
</dbReference>
<dbReference type="GO" id="GO:0030291">
    <property type="term" value="F:protein serine/threonine kinase inhibitor activity"/>
    <property type="evidence" value="ECO:0007669"/>
    <property type="project" value="UniProtKB-KW"/>
</dbReference>
<dbReference type="GO" id="GO:0003723">
    <property type="term" value="F:RNA binding"/>
    <property type="evidence" value="ECO:0007669"/>
    <property type="project" value="UniProtKB-KW"/>
</dbReference>
<dbReference type="GO" id="GO:0039540">
    <property type="term" value="P:symbiont-mediated suppression of host cytoplasmic pattern recognition receptor signaling pathway via inhibition of RIG-I activity"/>
    <property type="evidence" value="ECO:0007669"/>
    <property type="project" value="UniProtKB-KW"/>
</dbReference>
<dbReference type="GO" id="GO:0039657">
    <property type="term" value="P:symbiont-mediated suppression of host gene expression"/>
    <property type="evidence" value="ECO:0007669"/>
    <property type="project" value="UniProtKB-KW"/>
</dbReference>
<dbReference type="GO" id="GO:0039524">
    <property type="term" value="P:symbiont-mediated suppression of host mRNA processing"/>
    <property type="evidence" value="ECO:0007669"/>
    <property type="project" value="UniProtKB-KW"/>
</dbReference>
<dbReference type="GO" id="GO:0039580">
    <property type="term" value="P:symbiont-mediated suppression of host PKR/eIFalpha signaling"/>
    <property type="evidence" value="ECO:0007669"/>
    <property type="project" value="UniProtKB-KW"/>
</dbReference>
<dbReference type="GO" id="GO:0039502">
    <property type="term" value="P:symbiont-mediated suppression of host type I interferon-mediated signaling pathway"/>
    <property type="evidence" value="ECO:0007669"/>
    <property type="project" value="UniProtKB-KW"/>
</dbReference>
<dbReference type="FunFam" id="1.10.287.10:FF:000001">
    <property type="entry name" value="Non-structural protein 1"/>
    <property type="match status" value="1"/>
</dbReference>
<dbReference type="FunFam" id="3.30.420.330:FF:000001">
    <property type="entry name" value="Non-structural protein 1"/>
    <property type="match status" value="1"/>
</dbReference>
<dbReference type="Gene3D" id="3.30.420.330">
    <property type="entry name" value="Influenza virus non-structural protein, effector domain"/>
    <property type="match status" value="1"/>
</dbReference>
<dbReference type="Gene3D" id="1.10.287.10">
    <property type="entry name" value="S15/NS1, RNA-binding"/>
    <property type="match status" value="1"/>
</dbReference>
<dbReference type="HAMAP" id="MF_04066">
    <property type="entry name" value="INFV_NS1"/>
    <property type="match status" value="1"/>
</dbReference>
<dbReference type="InterPro" id="IPR004208">
    <property type="entry name" value="NS1"/>
</dbReference>
<dbReference type="InterPro" id="IPR000256">
    <property type="entry name" value="NS1A"/>
</dbReference>
<dbReference type="InterPro" id="IPR038064">
    <property type="entry name" value="NS1A_effect_dom-like_sf"/>
</dbReference>
<dbReference type="InterPro" id="IPR009068">
    <property type="entry name" value="uS15_NS1_RNA-bd_sf"/>
</dbReference>
<dbReference type="Pfam" id="PF00600">
    <property type="entry name" value="Flu_NS1"/>
    <property type="match status" value="1"/>
</dbReference>
<dbReference type="SUPFAM" id="SSF143021">
    <property type="entry name" value="Ns1 effector domain-like"/>
    <property type="match status" value="1"/>
</dbReference>
<dbReference type="SUPFAM" id="SSF47060">
    <property type="entry name" value="S15/NS1 RNA-binding domain"/>
    <property type="match status" value="1"/>
</dbReference>
<feature type="chain" id="PRO_0000078916" description="Non-structural protein 1">
    <location>
        <begin position="1"/>
        <end position="237"/>
    </location>
</feature>
<feature type="region of interest" description="RNA-binding and homodimerization" evidence="1">
    <location>
        <begin position="1"/>
        <end position="73"/>
    </location>
</feature>
<feature type="region of interest" description="CPSF4-binding" evidence="1">
    <location>
        <begin position="180"/>
        <end position="215"/>
    </location>
</feature>
<feature type="region of interest" description="Disordered" evidence="2">
    <location>
        <begin position="205"/>
        <end position="237"/>
    </location>
</feature>
<feature type="region of interest" description="PABPN1-binding" evidence="1">
    <location>
        <begin position="223"/>
        <end position="230"/>
    </location>
</feature>
<feature type="short sequence motif" description="Nuclear localization signal" evidence="1">
    <location>
        <begin position="34"/>
        <end position="38"/>
    </location>
</feature>
<feature type="short sequence motif" description="Nuclear export signal" evidence="1">
    <location>
        <begin position="137"/>
        <end position="146"/>
    </location>
</feature>
<feature type="compositionally biased region" description="Basic residues" evidence="2">
    <location>
        <begin position="217"/>
        <end position="237"/>
    </location>
</feature>
<name>NS1_I77A0</name>
<sequence length="237" mass="26824">MDSNTVSSFQVDCFLWHVRKQVVDQELGDAPFLDRLRRDQRSLRGRGSTLGLDIEAATHVGKQIVEKILKEESDEALKMTMASTPASRYITDMTIEELSRDWFMLMPKQKVEGPLCIRMDQAIMEKNIMLKANFSVIFDRLETLILLRAFTEEGAIVGEISPLLSFPGHTIEDVKNAIGVLIGGLEWNDNTVRVSKTLQRFAWGSSNENGGPPLTPKQKRKMARTARSKVRRDKMAD</sequence>
<gene>
    <name evidence="1" type="primary">NS</name>
</gene>
<comment type="function">
    <text evidence="1">Inhibits post-transcriptional processing of cellular pre-mRNA, by binding and inhibiting two cellular proteins that are required for the 3'-end processing of cellular pre-mRNAs: the 30 kDa cleavage and polyadenylation specificity factor/CPSF4 and the poly(A)-binding protein 2/PABPN1. In turn, unprocessed 3' end pre-mRNAs accumulate in the host nucleus and are no longer exported to the cytoplasm. Cellular protein synthesis is thereby shut off very early after virus infection. Viral protein synthesis is not affected by the inhibition of the cellular 3' end processing machinery because the poly(A) tails of viral mRNAs are produced by the viral polymerase through a stuttering mechanism. Prevents the establishment of the cellular antiviral state by inhibiting TRIM25-mediated RIGI ubiquitination, which normally triggers the antiviral transduction signal that leads to the activation of type I IFN genes by transcription factors IRF3 and IRF7. Also binds poly(A) and U6 snRNA. Inhibits the integrated stress response (ISR) in the infected cell by blocking dsRNA binding by EIF2AK2/PKR and further phosphorylation of EIF2S1/EIF-2ALPHA. Stress granule formation is thus inhibited, which allows protein synthesis and viral replication.</text>
</comment>
<comment type="subunit">
    <text evidence="1">Homodimer. Interacts with host TRIM25 (via coiled coil); this interaction specifically inhibits TRIM25 multimerization and TRIM25-mediated RIGI CARD ubiquitination. Interacts with human EIF2AK2/PKR, CPSF4, IVNS1ABP and PABPN1.</text>
</comment>
<comment type="subcellular location">
    <subcellularLocation>
        <location evidence="1">Host nucleus</location>
    </subcellularLocation>
    <subcellularLocation>
        <location evidence="1">Host cytoplasm</location>
    </subcellularLocation>
    <text evidence="1">In uninfected, transfected cells, NS1 is localized in the nucleus. Only in virus infected cells, the nuclear export signal is unveiled, presumably by a viral protein, and a fraction of NS1 is exported in the cytoplasm.</text>
</comment>
<comment type="alternative products">
    <event type="alternative splicing"/>
    <isoform>
        <id>P03494-1</id>
        <name>NS1</name>
        <sequence type="displayed"/>
    </isoform>
    <isoform>
        <id>P69257-1</id>
        <name>NEP</name>
        <name>NS2</name>
        <sequence type="external"/>
    </isoform>
</comment>
<comment type="domain">
    <text evidence="1">The dsRNA-binding region is required for suppression of RNA silencing.</text>
</comment>
<comment type="PTM">
    <text evidence="1">Upon interferon induction, ISGylated via host HERC5; this results in the impairment of NS1 interaction with RNA targets due to its inability to form homodimers and to interact with host EIF2AK2/PKR.</text>
</comment>
<comment type="similarity">
    <text evidence="1">Belongs to the influenza A viruses NS1 family.</text>
</comment>